<organism>
    <name type="scientific">Oryza sativa subsp. indica</name>
    <name type="common">Rice</name>
    <dbReference type="NCBI Taxonomy" id="39946"/>
    <lineage>
        <taxon>Eukaryota</taxon>
        <taxon>Viridiplantae</taxon>
        <taxon>Streptophyta</taxon>
        <taxon>Embryophyta</taxon>
        <taxon>Tracheophyta</taxon>
        <taxon>Spermatophyta</taxon>
        <taxon>Magnoliopsida</taxon>
        <taxon>Liliopsida</taxon>
        <taxon>Poales</taxon>
        <taxon>Poaceae</taxon>
        <taxon>BOP clade</taxon>
        <taxon>Oryzoideae</taxon>
        <taxon>Oryzeae</taxon>
        <taxon>Oryzinae</taxon>
        <taxon>Oryza</taxon>
        <taxon>Oryza sativa</taxon>
    </lineage>
</organism>
<accession>A2X0R4</accession>
<evidence type="ECO:0000255" key="1">
    <source>
        <dbReference type="HAMAP-Rule" id="MF_03052"/>
    </source>
</evidence>
<evidence type="ECO:0000256" key="2">
    <source>
        <dbReference type="SAM" id="MobiDB-lite"/>
    </source>
</evidence>
<reference key="1">
    <citation type="journal article" date="2005" name="PLoS Biol.">
        <title>The genomes of Oryza sativa: a history of duplications.</title>
        <authorList>
            <person name="Yu J."/>
            <person name="Wang J."/>
            <person name="Lin W."/>
            <person name="Li S."/>
            <person name="Li H."/>
            <person name="Zhou J."/>
            <person name="Ni P."/>
            <person name="Dong W."/>
            <person name="Hu S."/>
            <person name="Zeng C."/>
            <person name="Zhang J."/>
            <person name="Zhang Y."/>
            <person name="Li R."/>
            <person name="Xu Z."/>
            <person name="Li S."/>
            <person name="Li X."/>
            <person name="Zheng H."/>
            <person name="Cong L."/>
            <person name="Lin L."/>
            <person name="Yin J."/>
            <person name="Geng J."/>
            <person name="Li G."/>
            <person name="Shi J."/>
            <person name="Liu J."/>
            <person name="Lv H."/>
            <person name="Li J."/>
            <person name="Wang J."/>
            <person name="Deng Y."/>
            <person name="Ran L."/>
            <person name="Shi X."/>
            <person name="Wang X."/>
            <person name="Wu Q."/>
            <person name="Li C."/>
            <person name="Ren X."/>
            <person name="Wang J."/>
            <person name="Wang X."/>
            <person name="Li D."/>
            <person name="Liu D."/>
            <person name="Zhang X."/>
            <person name="Ji Z."/>
            <person name="Zhao W."/>
            <person name="Sun Y."/>
            <person name="Zhang Z."/>
            <person name="Bao J."/>
            <person name="Han Y."/>
            <person name="Dong L."/>
            <person name="Ji J."/>
            <person name="Chen P."/>
            <person name="Wu S."/>
            <person name="Liu J."/>
            <person name="Xiao Y."/>
            <person name="Bu D."/>
            <person name="Tan J."/>
            <person name="Yang L."/>
            <person name="Ye C."/>
            <person name="Zhang J."/>
            <person name="Xu J."/>
            <person name="Zhou Y."/>
            <person name="Yu Y."/>
            <person name="Zhang B."/>
            <person name="Zhuang S."/>
            <person name="Wei H."/>
            <person name="Liu B."/>
            <person name="Lei M."/>
            <person name="Yu H."/>
            <person name="Li Y."/>
            <person name="Xu H."/>
            <person name="Wei S."/>
            <person name="He X."/>
            <person name="Fang L."/>
            <person name="Zhang Z."/>
            <person name="Zhang Y."/>
            <person name="Huang X."/>
            <person name="Su Z."/>
            <person name="Tong W."/>
            <person name="Li J."/>
            <person name="Tong Z."/>
            <person name="Li S."/>
            <person name="Ye J."/>
            <person name="Wang L."/>
            <person name="Fang L."/>
            <person name="Lei T."/>
            <person name="Chen C.-S."/>
            <person name="Chen H.-C."/>
            <person name="Xu Z."/>
            <person name="Li H."/>
            <person name="Huang H."/>
            <person name="Zhang F."/>
            <person name="Xu H."/>
            <person name="Li N."/>
            <person name="Zhao C."/>
            <person name="Li S."/>
            <person name="Dong L."/>
            <person name="Huang Y."/>
            <person name="Li L."/>
            <person name="Xi Y."/>
            <person name="Qi Q."/>
            <person name="Li W."/>
            <person name="Zhang B."/>
            <person name="Hu W."/>
            <person name="Zhang Y."/>
            <person name="Tian X."/>
            <person name="Jiao Y."/>
            <person name="Liang X."/>
            <person name="Jin J."/>
            <person name="Gao L."/>
            <person name="Zheng W."/>
            <person name="Hao B."/>
            <person name="Liu S.-M."/>
            <person name="Wang W."/>
            <person name="Yuan L."/>
            <person name="Cao M."/>
            <person name="McDermott J."/>
            <person name="Samudrala R."/>
            <person name="Wang J."/>
            <person name="Wong G.K.-S."/>
            <person name="Yang H."/>
        </authorList>
    </citation>
    <scope>NUCLEOTIDE SEQUENCE [LARGE SCALE GENOMIC DNA]</scope>
    <source>
        <strain>cv. 93-11</strain>
    </source>
</reference>
<sequence>MASDELPVAAAATEEEDLVEILDEGSGRLDIARYVDHVRDLAAGAIATFEGTTRDSFEGRRVVELRYEAYGAMARRRLAAILREARAAHSLRRLAVAHRLGTVPAGEASVFVAASAVHRADAMEACRYVIDEVKASVPIWKKEVYDDGEVWKENREFLDRTTTDGTTASSPAPATRPAKGGGCCGSKVRANES</sequence>
<feature type="chain" id="PRO_0000369346" description="Molybdopterin synthase catalytic subunit">
    <location>
        <begin position="1"/>
        <end position="193"/>
    </location>
</feature>
<feature type="region of interest" description="Disordered" evidence="2">
    <location>
        <begin position="159"/>
        <end position="193"/>
    </location>
</feature>
<feature type="compositionally biased region" description="Low complexity" evidence="2">
    <location>
        <begin position="163"/>
        <end position="178"/>
    </location>
</feature>
<feature type="binding site" evidence="1">
    <location>
        <begin position="118"/>
        <end position="119"/>
    </location>
    <ligand>
        <name>substrate</name>
    </ligand>
</feature>
<feature type="binding site" evidence="1">
    <location>
        <position position="134"/>
    </location>
    <ligand>
        <name>substrate</name>
    </ligand>
</feature>
<feature type="binding site" evidence="1">
    <location>
        <begin position="141"/>
        <end position="143"/>
    </location>
    <ligand>
        <name>substrate</name>
    </ligand>
</feature>
<comment type="function">
    <text evidence="1">Catalytic subunit of the molybdopterin synthase complex, a complex that catalyzes the conversion of precursor Z into molybdopterin. Acts by mediating the incorporation of 2 sulfur atoms from thiocarboxylated MOCS2A into precursor Z to generate a dithiolene group.</text>
</comment>
<comment type="catalytic activity">
    <reaction evidence="1">
        <text>2 [molybdopterin-synthase sulfur-carrier protein]-C-terminal-Gly-aminoethanethioate + cyclic pyranopterin phosphate + H2O = molybdopterin + 2 [molybdopterin-synthase sulfur-carrier protein]-C-terminal Gly-Gly + 2 H(+)</text>
        <dbReference type="Rhea" id="RHEA:26333"/>
        <dbReference type="Rhea" id="RHEA-COMP:12202"/>
        <dbReference type="Rhea" id="RHEA-COMP:19907"/>
        <dbReference type="ChEBI" id="CHEBI:15377"/>
        <dbReference type="ChEBI" id="CHEBI:15378"/>
        <dbReference type="ChEBI" id="CHEBI:58698"/>
        <dbReference type="ChEBI" id="CHEBI:59648"/>
        <dbReference type="ChEBI" id="CHEBI:90778"/>
        <dbReference type="ChEBI" id="CHEBI:232372"/>
        <dbReference type="EC" id="2.8.1.12"/>
    </reaction>
</comment>
<comment type="pathway">
    <text evidence="1">Cofactor biosynthesis; molybdopterin biosynthesis.</text>
</comment>
<comment type="subunit">
    <text evidence="1">Heterotetramer; composed of 2 small (MOCS2A) and 2 large (MOCS2B) subunits.</text>
</comment>
<comment type="subcellular location">
    <subcellularLocation>
        <location evidence="1">Cytoplasm</location>
    </subcellularLocation>
</comment>
<comment type="similarity">
    <text evidence="1">Belongs to the MoaE family. MOCS2B subfamily.</text>
</comment>
<gene>
    <name evidence="1" type="primary">MOCS2</name>
    <name type="ORF">OsI_005657</name>
</gene>
<keyword id="KW-0963">Cytoplasm</keyword>
<keyword id="KW-0501">Molybdenum cofactor biosynthesis</keyword>
<keyword id="KW-1185">Reference proteome</keyword>
<keyword id="KW-0808">Transferase</keyword>
<protein>
    <recommendedName>
        <fullName evidence="1">Molybdopterin synthase catalytic subunit</fullName>
        <ecNumber evidence="1">2.8.1.12</ecNumber>
    </recommendedName>
    <alternativeName>
        <fullName evidence="1">Molybdenum cofactor synthesis protein 2 large subunit</fullName>
    </alternativeName>
    <alternativeName>
        <fullName evidence="1">Molybdenum cofactor synthesis protein 2B</fullName>
        <shortName evidence="1">MOCS2B</shortName>
    </alternativeName>
</protein>
<dbReference type="EC" id="2.8.1.12" evidence="1"/>
<dbReference type="EMBL" id="CM000127">
    <property type="protein sequence ID" value="EAY84424.1"/>
    <property type="molecule type" value="Genomic_DNA"/>
</dbReference>
<dbReference type="SMR" id="A2X0R4"/>
<dbReference type="STRING" id="39946.A2X0R4"/>
<dbReference type="EnsemblPlants" id="BGIOSGA007504-TA">
    <property type="protein sequence ID" value="BGIOSGA007504-PA"/>
    <property type="gene ID" value="BGIOSGA007504"/>
</dbReference>
<dbReference type="EnsemblPlants" id="OsZS97_02G003100_01">
    <property type="protein sequence ID" value="OsZS97_02G003100_01"/>
    <property type="gene ID" value="OsZS97_02G003100"/>
</dbReference>
<dbReference type="Gramene" id="BGIOSGA007504-TA">
    <property type="protein sequence ID" value="BGIOSGA007504-PA"/>
    <property type="gene ID" value="BGIOSGA007504"/>
</dbReference>
<dbReference type="Gramene" id="OsZS97_02G003100_01">
    <property type="protein sequence ID" value="OsZS97_02G003100_01"/>
    <property type="gene ID" value="OsZS97_02G003100"/>
</dbReference>
<dbReference type="HOGENOM" id="CLU_089568_0_0_1"/>
<dbReference type="OMA" id="HERKSCC"/>
<dbReference type="OrthoDB" id="414463at2759"/>
<dbReference type="UniPathway" id="UPA00344"/>
<dbReference type="Proteomes" id="UP000007015">
    <property type="component" value="Chromosome 2"/>
</dbReference>
<dbReference type="GO" id="GO:1990140">
    <property type="term" value="C:molybdopterin synthase complex"/>
    <property type="evidence" value="ECO:0000250"/>
    <property type="project" value="UniProtKB"/>
</dbReference>
<dbReference type="GO" id="GO:0030366">
    <property type="term" value="F:molybdopterin synthase activity"/>
    <property type="evidence" value="ECO:0007669"/>
    <property type="project" value="UniProtKB-UniRule"/>
</dbReference>
<dbReference type="GO" id="GO:0006777">
    <property type="term" value="P:Mo-molybdopterin cofactor biosynthetic process"/>
    <property type="evidence" value="ECO:0000250"/>
    <property type="project" value="UniProtKB"/>
</dbReference>
<dbReference type="CDD" id="cd00756">
    <property type="entry name" value="MoaE"/>
    <property type="match status" value="1"/>
</dbReference>
<dbReference type="FunFam" id="3.90.1170.40:FF:000002">
    <property type="entry name" value="Molybdopterin synthase catalytic subunit"/>
    <property type="match status" value="1"/>
</dbReference>
<dbReference type="Gene3D" id="3.90.1170.40">
    <property type="entry name" value="Molybdopterin biosynthesis MoaE subunit"/>
    <property type="match status" value="1"/>
</dbReference>
<dbReference type="HAMAP" id="MF_03052">
    <property type="entry name" value="MOC2B"/>
    <property type="match status" value="1"/>
</dbReference>
<dbReference type="InterPro" id="IPR036563">
    <property type="entry name" value="MoaE_sf"/>
</dbReference>
<dbReference type="InterPro" id="IPR028888">
    <property type="entry name" value="MOCS2B_euk"/>
</dbReference>
<dbReference type="InterPro" id="IPR003448">
    <property type="entry name" value="Mopterin_biosynth_MoaE"/>
</dbReference>
<dbReference type="PANTHER" id="PTHR23404">
    <property type="entry name" value="MOLYBDOPTERIN SYNTHASE RELATED"/>
    <property type="match status" value="1"/>
</dbReference>
<dbReference type="Pfam" id="PF02391">
    <property type="entry name" value="MoaE"/>
    <property type="match status" value="1"/>
</dbReference>
<dbReference type="SUPFAM" id="SSF54690">
    <property type="entry name" value="Molybdopterin synthase subunit MoaE"/>
    <property type="match status" value="1"/>
</dbReference>
<name>MOC2B_ORYSI</name>
<proteinExistence type="inferred from homology"/>